<dbReference type="EMBL" id="CP001145">
    <property type="protein sequence ID" value="ACI17574.1"/>
    <property type="molecule type" value="Genomic_DNA"/>
</dbReference>
<dbReference type="RefSeq" id="WP_012544226.1">
    <property type="nucleotide sequence ID" value="NC_011295.1"/>
</dbReference>
<dbReference type="SMR" id="B5Y962"/>
<dbReference type="STRING" id="309798.COPRO5265_0987"/>
<dbReference type="KEGG" id="cpo:COPRO5265_0987"/>
<dbReference type="eggNOG" id="COG0100">
    <property type="taxonomic scope" value="Bacteria"/>
</dbReference>
<dbReference type="HOGENOM" id="CLU_072439_5_0_9"/>
<dbReference type="OrthoDB" id="9806415at2"/>
<dbReference type="Proteomes" id="UP000001732">
    <property type="component" value="Chromosome"/>
</dbReference>
<dbReference type="GO" id="GO:1990904">
    <property type="term" value="C:ribonucleoprotein complex"/>
    <property type="evidence" value="ECO:0007669"/>
    <property type="project" value="UniProtKB-KW"/>
</dbReference>
<dbReference type="GO" id="GO:0005840">
    <property type="term" value="C:ribosome"/>
    <property type="evidence" value="ECO:0007669"/>
    <property type="project" value="UniProtKB-KW"/>
</dbReference>
<dbReference type="GO" id="GO:0019843">
    <property type="term" value="F:rRNA binding"/>
    <property type="evidence" value="ECO:0007669"/>
    <property type="project" value="UniProtKB-UniRule"/>
</dbReference>
<dbReference type="GO" id="GO:0003735">
    <property type="term" value="F:structural constituent of ribosome"/>
    <property type="evidence" value="ECO:0007669"/>
    <property type="project" value="InterPro"/>
</dbReference>
<dbReference type="GO" id="GO:0006412">
    <property type="term" value="P:translation"/>
    <property type="evidence" value="ECO:0007669"/>
    <property type="project" value="UniProtKB-UniRule"/>
</dbReference>
<dbReference type="FunFam" id="3.30.420.80:FF:000001">
    <property type="entry name" value="30S ribosomal protein S11"/>
    <property type="match status" value="1"/>
</dbReference>
<dbReference type="Gene3D" id="3.30.420.80">
    <property type="entry name" value="Ribosomal protein S11"/>
    <property type="match status" value="1"/>
</dbReference>
<dbReference type="HAMAP" id="MF_01310">
    <property type="entry name" value="Ribosomal_uS11"/>
    <property type="match status" value="1"/>
</dbReference>
<dbReference type="InterPro" id="IPR001971">
    <property type="entry name" value="Ribosomal_uS11"/>
</dbReference>
<dbReference type="InterPro" id="IPR019981">
    <property type="entry name" value="Ribosomal_uS11_bac-type"/>
</dbReference>
<dbReference type="InterPro" id="IPR018102">
    <property type="entry name" value="Ribosomal_uS11_CS"/>
</dbReference>
<dbReference type="InterPro" id="IPR036967">
    <property type="entry name" value="Ribosomal_uS11_sf"/>
</dbReference>
<dbReference type="NCBIfam" id="NF003698">
    <property type="entry name" value="PRK05309.1"/>
    <property type="match status" value="1"/>
</dbReference>
<dbReference type="NCBIfam" id="TIGR03632">
    <property type="entry name" value="uS11_bact"/>
    <property type="match status" value="1"/>
</dbReference>
<dbReference type="PANTHER" id="PTHR11759">
    <property type="entry name" value="40S RIBOSOMAL PROTEIN S14/30S RIBOSOMAL PROTEIN S11"/>
    <property type="match status" value="1"/>
</dbReference>
<dbReference type="Pfam" id="PF00411">
    <property type="entry name" value="Ribosomal_S11"/>
    <property type="match status" value="1"/>
</dbReference>
<dbReference type="PIRSF" id="PIRSF002131">
    <property type="entry name" value="Ribosomal_S11"/>
    <property type="match status" value="1"/>
</dbReference>
<dbReference type="SUPFAM" id="SSF53137">
    <property type="entry name" value="Translational machinery components"/>
    <property type="match status" value="1"/>
</dbReference>
<dbReference type="PROSITE" id="PS00054">
    <property type="entry name" value="RIBOSOMAL_S11"/>
    <property type="match status" value="1"/>
</dbReference>
<gene>
    <name evidence="1" type="primary">rpsK</name>
    <name type="ordered locus">COPRO5265_0987</name>
</gene>
<feature type="chain" id="PRO_1000141075" description="Small ribosomal subunit protein uS11">
    <location>
        <begin position="1"/>
        <end position="125"/>
    </location>
</feature>
<accession>B5Y962</accession>
<sequence length="125" mass="13664">MAQKKRKERRYVPYGVAHIHSTFNNTIITITDPNGAVLAWASGGFFFKGTRKGTPYAAQLASESVAKKVQQTYGMKEIDVFVKGPGPGRETAIRALQAVGLDVKSIKDVTPIPHNGCRPPKARRV</sequence>
<organism>
    <name type="scientific">Coprothermobacter proteolyticus (strain ATCC 35245 / DSM 5265 / OCM 4 / BT)</name>
    <dbReference type="NCBI Taxonomy" id="309798"/>
    <lineage>
        <taxon>Bacteria</taxon>
        <taxon>Pseudomonadati</taxon>
        <taxon>Coprothermobacterota</taxon>
        <taxon>Coprothermobacteria</taxon>
        <taxon>Coprothermobacterales</taxon>
        <taxon>Coprothermobacteraceae</taxon>
        <taxon>Coprothermobacter</taxon>
    </lineage>
</organism>
<comment type="function">
    <text evidence="1">Located on the platform of the 30S subunit, it bridges several disparate RNA helices of the 16S rRNA. Forms part of the Shine-Dalgarno cleft in the 70S ribosome.</text>
</comment>
<comment type="subunit">
    <text evidence="1">Part of the 30S ribosomal subunit. Interacts with proteins S7 and S18. Binds to IF-3.</text>
</comment>
<comment type="similarity">
    <text evidence="1">Belongs to the universal ribosomal protein uS11 family.</text>
</comment>
<protein>
    <recommendedName>
        <fullName evidence="1">Small ribosomal subunit protein uS11</fullName>
    </recommendedName>
    <alternativeName>
        <fullName evidence="2">30S ribosomal protein S11</fullName>
    </alternativeName>
</protein>
<reference key="1">
    <citation type="submission" date="2008-08" db="EMBL/GenBank/DDBJ databases">
        <title>The complete genome sequence of Coprothermobacter proteolyticus strain ATCC 5245 / DSM 5265 / BT.</title>
        <authorList>
            <person name="Dodson R.J."/>
            <person name="Durkin A.S."/>
            <person name="Wu M."/>
            <person name="Eisen J."/>
            <person name="Sutton G."/>
        </authorList>
    </citation>
    <scope>NUCLEOTIDE SEQUENCE [LARGE SCALE GENOMIC DNA]</scope>
    <source>
        <strain>ATCC 35245 / DSM 5265 / OCM 4 / BT</strain>
    </source>
</reference>
<keyword id="KW-1185">Reference proteome</keyword>
<keyword id="KW-0687">Ribonucleoprotein</keyword>
<keyword id="KW-0689">Ribosomal protein</keyword>
<keyword id="KW-0694">RNA-binding</keyword>
<keyword id="KW-0699">rRNA-binding</keyword>
<proteinExistence type="inferred from homology"/>
<evidence type="ECO:0000255" key="1">
    <source>
        <dbReference type="HAMAP-Rule" id="MF_01310"/>
    </source>
</evidence>
<evidence type="ECO:0000305" key="2"/>
<name>RS11_COPPD</name>